<organismHost>
    <name type="scientific">Saccharum officinarum</name>
    <name type="common">Sugarcane</name>
    <dbReference type="NCBI Taxonomy" id="4547"/>
</organismHost>
<gene>
    <name type="primary">S2</name>
</gene>
<evidence type="ECO:0000250" key="1">
    <source>
        <dbReference type="UniProtKB" id="P15024"/>
    </source>
</evidence>
<evidence type="ECO:0000256" key="2">
    <source>
        <dbReference type="SAM" id="MobiDB-lite"/>
    </source>
</evidence>
<evidence type="ECO:0000305" key="3"/>
<sequence length="1193" mass="137043">MKSFKWKENTEEKDDEEKTNEKEQNKPKEIDSKTEQEAKQEKVSEADNSVKDQEGITNKNRPEDISYVDDSTIQAKTALTVEAITNIKGHLIESDQKLADERASQYLQTLTNNAVRYTTTFGISEISDEILIPYYHEIDFQGSDKELPSLFSFETFVNEYYGTDLLTYENEKFKTMMCDHPALSRSSEIFKVNAYKISIKWTGETFNPSIGDPSNIGTTSLIKNIAYVGVHNSDNYKDRKLYSRLKMFLELAANCNIILKGCATRPLGIDYELTKVSKKLNGAKILYNDKAHIIYNGIYHPVTPFCDKVNDILKEGDVDIDFGKIFKYGREVVTKINTYDILNKGYAAIDQFTAYLINMGMQRLLDHRMNANSYKDLTQANYPSRVSLHVFDTLLDEFLYVYKPTDQDWEFCLFVIMIDKEVRSLIMAKTKQMMLSRNLFGQSEIGLKLTNLITRRVQGNIAKNAADYFINVMSSGSIESLCNILCSEMYARFSKFNIECSYLETEYLDLFKFLEILLAFIITPRLAWWNSHKFGKHLYDLMSVFCRSELIAYEARYGCFIKFERSAWVKVDKHVSVYGENDLYDGIYFSFLISRTYSAEEIKAFPFISKIYSLIEPLGDYINLDRKTRAKYPFFETTVRGYLPCSIISYTDITTNNPVNTRVNNIGASIIDLSQRYFTHKPTKTSTKEAYDLILDTIGNTANNLGILMHSTVAPMLATLYDTFLFFADGFNKTSPWVVPRKLGYSGYNVYADRNKSDADRATYLIGGRAIVIPRNLDSTNSMIYTYIGIFVHGVVRCDMVTSTGSYITSSHYDPDSISIMPFNGSEITTLALKVVNHSKRINTVFTLFNYLHSKSTDEILSPVRERLSKFWTTSNARALLNEITRIFNCPIERYFTQMNAYDTMHSDPRVYKPTLYSVSSTGNIDSVQPANCAVNKQYEFGDTYLNEMLKVISHVAFDDELPLFRQTEGLVCGYFTSSSNSPDDYFSVDEDTLYFSIDLDEHPEVFTTVGTNGFSIQLQFKKGNDDHAYTNPMSKDIPSIKFLINRIGNLNAHFVQFINRMLSTQRHLIVLRKVVVDYNVITLGSWNDYTPTSSNVFDQFVKDRDLINIKLDFYDTRFIIQNQSNQLLSQYLFESYRNITPLKDFVVMGGIFGNPNRAESKLTDINKDIYCFGDDNDQTTKYFTSKKSKRVV</sequence>
<protein>
    <recommendedName>
        <fullName>Inner capsid protein S2</fullName>
    </recommendedName>
</protein>
<comment type="function">
    <text evidence="1">Inner capsid protein that self-assembles to form an icosahedral capsid with a T=2 symmetry, which consists of 120 copies of VP2, with channels at each of its five-fold vertices. This capsid constitutes the innermost concentric layer of the viral mature particle.</text>
</comment>
<comment type="subunit">
    <text evidence="1">Homodecamer; each decamer is made up of two conformers of VP2, called VP2A and VP2B. 12 homodecamers assemble to form an icosahedral capsid.</text>
</comment>
<comment type="subcellular location">
    <subcellularLocation>
        <location evidence="1">Virion</location>
    </subcellularLocation>
    <text evidence="1">Found in the inner capsid (120 copies).</text>
</comment>
<comment type="miscellaneous">
    <text evidence="3">Function inferred by structural homology with BTV-fold inner capsid family.</text>
</comment>
<comment type="similarity">
    <text evidence="3">Belongs to the turreted BTV-fold inner capsid family.</text>
</comment>
<proteinExistence type="inferred from homology"/>
<organism>
    <name type="scientific">Fiji disease virus (isolate Sugarcane)</name>
    <name type="common">FDV</name>
    <dbReference type="NCBI Taxonomy" id="648172"/>
    <lineage>
        <taxon>Viruses</taxon>
        <taxon>Riboviria</taxon>
        <taxon>Orthornavirae</taxon>
        <taxon>Duplornaviricota</taxon>
        <taxon>Resentoviricetes</taxon>
        <taxon>Reovirales</taxon>
        <taxon>Spinareoviridae</taxon>
        <taxon>Fijivirus</taxon>
        <taxon>Fiji disease virus</taxon>
    </lineage>
</organism>
<name>CAPSD_FDVS</name>
<accession>Q9YX48</accession>
<feature type="chain" id="PRO_0000403404" description="Inner capsid protein S2">
    <location>
        <begin position="1"/>
        <end position="1193"/>
    </location>
</feature>
<feature type="region of interest" description="Disordered" evidence="2">
    <location>
        <begin position="1"/>
        <end position="64"/>
    </location>
</feature>
<feature type="compositionally biased region" description="Basic and acidic residues" evidence="2">
    <location>
        <begin position="1"/>
        <end position="10"/>
    </location>
</feature>
<feature type="compositionally biased region" description="Basic and acidic residues" evidence="2">
    <location>
        <begin position="19"/>
        <end position="64"/>
    </location>
</feature>
<dbReference type="EMBL" id="AF049704">
    <property type="protein sequence ID" value="AAD02490.1"/>
    <property type="molecule type" value="Genomic_RNA"/>
</dbReference>
<dbReference type="RefSeq" id="YP_249756.1">
    <property type="nucleotide sequence ID" value="NC_007154.1"/>
</dbReference>
<dbReference type="KEGG" id="vg:5075878"/>
<dbReference type="Proteomes" id="UP000001677">
    <property type="component" value="Genome"/>
</dbReference>
<dbReference type="GO" id="GO:0039616">
    <property type="term" value="C:T=2 icosahedral viral capsid"/>
    <property type="evidence" value="ECO:0007669"/>
    <property type="project" value="UniProtKB-KW"/>
</dbReference>
<dbReference type="GO" id="GO:0039625">
    <property type="term" value="C:viral inner capsid"/>
    <property type="evidence" value="ECO:0007669"/>
    <property type="project" value="UniProtKB-KW"/>
</dbReference>
<reference key="1">
    <citation type="submission" date="1998-02" db="EMBL/GenBank/DDBJ databases">
        <title>Molecular characterization of Fiji disease Fijivirus genome segments 3 and 4.</title>
        <authorList>
            <person name="Handley J.A."/>
            <person name="Soo L.M."/>
            <person name="Maugeri M.M."/>
            <person name="Burns P."/>
            <person name="Smith G.R."/>
            <person name="Dale J.L."/>
            <person name="Harding R.M."/>
        </authorList>
    </citation>
    <scope>NUCLEOTIDE SEQUENCE [GENOMIC RNA]</scope>
</reference>
<keyword id="KW-0167">Capsid protein</keyword>
<keyword id="KW-1153">Inner capsid protein</keyword>
<keyword id="KW-1185">Reference proteome</keyword>
<keyword id="KW-1141">T=2 icosahedral capsid protein</keyword>
<keyword id="KW-0946">Virion</keyword>